<evidence type="ECO:0000255" key="1">
    <source>
        <dbReference type="HAMAP-Rule" id="MF_00318"/>
    </source>
</evidence>
<protein>
    <recommendedName>
        <fullName evidence="1">Enolase</fullName>
        <ecNumber evidence="1">4.2.1.11</ecNumber>
    </recommendedName>
    <alternativeName>
        <fullName evidence="1">2-phospho-D-glycerate hydro-lyase</fullName>
    </alternativeName>
    <alternativeName>
        <fullName evidence="1">2-phosphoglycerate dehydratase</fullName>
    </alternativeName>
</protein>
<name>ENO_LACDB</name>
<dbReference type="EC" id="4.2.1.11" evidence="1"/>
<dbReference type="EMBL" id="CP000412">
    <property type="protein sequence ID" value="ABJ58739.1"/>
    <property type="molecule type" value="Genomic_DNA"/>
</dbReference>
<dbReference type="RefSeq" id="WP_002879863.1">
    <property type="nucleotide sequence ID" value="NC_008529.1"/>
</dbReference>
<dbReference type="SMR" id="Q049Y3"/>
<dbReference type="GeneID" id="69669139"/>
<dbReference type="KEGG" id="lbu:LBUL_1209"/>
<dbReference type="HOGENOM" id="CLU_031223_2_1_9"/>
<dbReference type="BioCyc" id="LDEL321956:LBUL_RS05650-MONOMER"/>
<dbReference type="UniPathway" id="UPA00109">
    <property type="reaction ID" value="UER00187"/>
</dbReference>
<dbReference type="GO" id="GO:0009986">
    <property type="term" value="C:cell surface"/>
    <property type="evidence" value="ECO:0007669"/>
    <property type="project" value="UniProtKB-SubCell"/>
</dbReference>
<dbReference type="GO" id="GO:0005576">
    <property type="term" value="C:extracellular region"/>
    <property type="evidence" value="ECO:0007669"/>
    <property type="project" value="UniProtKB-SubCell"/>
</dbReference>
<dbReference type="GO" id="GO:0000015">
    <property type="term" value="C:phosphopyruvate hydratase complex"/>
    <property type="evidence" value="ECO:0007669"/>
    <property type="project" value="InterPro"/>
</dbReference>
<dbReference type="GO" id="GO:0000287">
    <property type="term" value="F:magnesium ion binding"/>
    <property type="evidence" value="ECO:0007669"/>
    <property type="project" value="UniProtKB-UniRule"/>
</dbReference>
<dbReference type="GO" id="GO:0004634">
    <property type="term" value="F:phosphopyruvate hydratase activity"/>
    <property type="evidence" value="ECO:0007669"/>
    <property type="project" value="UniProtKB-UniRule"/>
</dbReference>
<dbReference type="GO" id="GO:0006096">
    <property type="term" value="P:glycolytic process"/>
    <property type="evidence" value="ECO:0007669"/>
    <property type="project" value="UniProtKB-UniRule"/>
</dbReference>
<dbReference type="CDD" id="cd03313">
    <property type="entry name" value="enolase"/>
    <property type="match status" value="1"/>
</dbReference>
<dbReference type="FunFam" id="3.20.20.120:FF:000014">
    <property type="entry name" value="Enolase"/>
    <property type="match status" value="1"/>
</dbReference>
<dbReference type="FunFam" id="3.30.390.10:FF:000001">
    <property type="entry name" value="Enolase"/>
    <property type="match status" value="1"/>
</dbReference>
<dbReference type="Gene3D" id="3.20.20.120">
    <property type="entry name" value="Enolase-like C-terminal domain"/>
    <property type="match status" value="1"/>
</dbReference>
<dbReference type="Gene3D" id="3.30.390.10">
    <property type="entry name" value="Enolase-like, N-terminal domain"/>
    <property type="match status" value="1"/>
</dbReference>
<dbReference type="HAMAP" id="MF_00318">
    <property type="entry name" value="Enolase"/>
    <property type="match status" value="1"/>
</dbReference>
<dbReference type="InterPro" id="IPR000941">
    <property type="entry name" value="Enolase"/>
</dbReference>
<dbReference type="InterPro" id="IPR036849">
    <property type="entry name" value="Enolase-like_C_sf"/>
</dbReference>
<dbReference type="InterPro" id="IPR029017">
    <property type="entry name" value="Enolase-like_N"/>
</dbReference>
<dbReference type="InterPro" id="IPR020810">
    <property type="entry name" value="Enolase_C"/>
</dbReference>
<dbReference type="InterPro" id="IPR020809">
    <property type="entry name" value="Enolase_CS"/>
</dbReference>
<dbReference type="InterPro" id="IPR020811">
    <property type="entry name" value="Enolase_N"/>
</dbReference>
<dbReference type="NCBIfam" id="TIGR01060">
    <property type="entry name" value="eno"/>
    <property type="match status" value="1"/>
</dbReference>
<dbReference type="PANTHER" id="PTHR11902">
    <property type="entry name" value="ENOLASE"/>
    <property type="match status" value="1"/>
</dbReference>
<dbReference type="PANTHER" id="PTHR11902:SF1">
    <property type="entry name" value="ENOLASE"/>
    <property type="match status" value="1"/>
</dbReference>
<dbReference type="Pfam" id="PF00113">
    <property type="entry name" value="Enolase_C"/>
    <property type="match status" value="1"/>
</dbReference>
<dbReference type="Pfam" id="PF03952">
    <property type="entry name" value="Enolase_N"/>
    <property type="match status" value="1"/>
</dbReference>
<dbReference type="PIRSF" id="PIRSF001400">
    <property type="entry name" value="Enolase"/>
    <property type="match status" value="1"/>
</dbReference>
<dbReference type="PRINTS" id="PR00148">
    <property type="entry name" value="ENOLASE"/>
</dbReference>
<dbReference type="SFLD" id="SFLDS00001">
    <property type="entry name" value="Enolase"/>
    <property type="match status" value="1"/>
</dbReference>
<dbReference type="SFLD" id="SFLDF00002">
    <property type="entry name" value="enolase"/>
    <property type="match status" value="1"/>
</dbReference>
<dbReference type="SMART" id="SM01192">
    <property type="entry name" value="Enolase_C"/>
    <property type="match status" value="1"/>
</dbReference>
<dbReference type="SMART" id="SM01193">
    <property type="entry name" value="Enolase_N"/>
    <property type="match status" value="1"/>
</dbReference>
<dbReference type="SUPFAM" id="SSF51604">
    <property type="entry name" value="Enolase C-terminal domain-like"/>
    <property type="match status" value="1"/>
</dbReference>
<dbReference type="SUPFAM" id="SSF54826">
    <property type="entry name" value="Enolase N-terminal domain-like"/>
    <property type="match status" value="1"/>
</dbReference>
<dbReference type="PROSITE" id="PS00164">
    <property type="entry name" value="ENOLASE"/>
    <property type="match status" value="1"/>
</dbReference>
<sequence length="425" mass="46341">MTKVVIENVHAREIFDSRGNPTVEVEVTLSNGVVGRAEVPSGASTGENEAVELRDGGSRLGGKGVMKAVNNVNTAINNELQGADPFNQPAIDKAMIELDGTPNKGKLGANAILGTSMATAVAAAKATHQPLYRYLGGTDLSMPQTFHNVINGGEHADNGIDIQEFMITPVKKTSFRDGFEKIVNTYHTLKKVLEEKGYETGLGDEGGFAPNMKDSEEALKALHEAIERAGYVPGEDIAIACDCAASYYYNKEDGKYHLEGKVLDGDQLAEYYDKLLAEFPELISMEDPYDENDTEGMVKFTQSHKDRLQIVLDDFICTNPRLLEKAIKEGAGNASLIKLNQIGTVTETLETIRISRKHGYNTMISHRSGETGDTFIADFAVATNGGQLKTGAPARSERVEKYNQLLRIEEQLGDGERLDFFPAQD</sequence>
<accession>Q049Y3</accession>
<gene>
    <name evidence="1" type="primary">eno</name>
    <name type="ordered locus">LBUL_1209</name>
</gene>
<organism>
    <name type="scientific">Lactobacillus delbrueckii subsp. bulgaricus (strain ATCC BAA-365 / Lb-18)</name>
    <dbReference type="NCBI Taxonomy" id="321956"/>
    <lineage>
        <taxon>Bacteria</taxon>
        <taxon>Bacillati</taxon>
        <taxon>Bacillota</taxon>
        <taxon>Bacilli</taxon>
        <taxon>Lactobacillales</taxon>
        <taxon>Lactobacillaceae</taxon>
        <taxon>Lactobacillus</taxon>
    </lineage>
</organism>
<reference key="1">
    <citation type="journal article" date="2006" name="Proc. Natl. Acad. Sci. U.S.A.">
        <title>Comparative genomics of the lactic acid bacteria.</title>
        <authorList>
            <person name="Makarova K.S."/>
            <person name="Slesarev A."/>
            <person name="Wolf Y.I."/>
            <person name="Sorokin A."/>
            <person name="Mirkin B."/>
            <person name="Koonin E.V."/>
            <person name="Pavlov A."/>
            <person name="Pavlova N."/>
            <person name="Karamychev V."/>
            <person name="Polouchine N."/>
            <person name="Shakhova V."/>
            <person name="Grigoriev I."/>
            <person name="Lou Y."/>
            <person name="Rohksar D."/>
            <person name="Lucas S."/>
            <person name="Huang K."/>
            <person name="Goodstein D.M."/>
            <person name="Hawkins T."/>
            <person name="Plengvidhya V."/>
            <person name="Welker D."/>
            <person name="Hughes J."/>
            <person name="Goh Y."/>
            <person name="Benson A."/>
            <person name="Baldwin K."/>
            <person name="Lee J.-H."/>
            <person name="Diaz-Muniz I."/>
            <person name="Dosti B."/>
            <person name="Smeianov V."/>
            <person name="Wechter W."/>
            <person name="Barabote R."/>
            <person name="Lorca G."/>
            <person name="Altermann E."/>
            <person name="Barrangou R."/>
            <person name="Ganesan B."/>
            <person name="Xie Y."/>
            <person name="Rawsthorne H."/>
            <person name="Tamir D."/>
            <person name="Parker C."/>
            <person name="Breidt F."/>
            <person name="Broadbent J.R."/>
            <person name="Hutkins R."/>
            <person name="O'Sullivan D."/>
            <person name="Steele J."/>
            <person name="Unlu G."/>
            <person name="Saier M.H. Jr."/>
            <person name="Klaenhammer T."/>
            <person name="Richardson P."/>
            <person name="Kozyavkin S."/>
            <person name="Weimer B.C."/>
            <person name="Mills D.A."/>
        </authorList>
    </citation>
    <scope>NUCLEOTIDE SEQUENCE [LARGE SCALE GENOMIC DNA]</scope>
    <source>
        <strain>ATCC BAA-365 / Lb-18</strain>
    </source>
</reference>
<comment type="function">
    <text evidence="1">Catalyzes the reversible conversion of 2-phosphoglycerate (2-PG) into phosphoenolpyruvate (PEP). It is essential for the degradation of carbohydrates via glycolysis.</text>
</comment>
<comment type="catalytic activity">
    <reaction evidence="1">
        <text>(2R)-2-phosphoglycerate = phosphoenolpyruvate + H2O</text>
        <dbReference type="Rhea" id="RHEA:10164"/>
        <dbReference type="ChEBI" id="CHEBI:15377"/>
        <dbReference type="ChEBI" id="CHEBI:58289"/>
        <dbReference type="ChEBI" id="CHEBI:58702"/>
        <dbReference type="EC" id="4.2.1.11"/>
    </reaction>
</comment>
<comment type="cofactor">
    <cofactor evidence="1">
        <name>Mg(2+)</name>
        <dbReference type="ChEBI" id="CHEBI:18420"/>
    </cofactor>
    <text evidence="1">Binds a second Mg(2+) ion via substrate during catalysis.</text>
</comment>
<comment type="pathway">
    <text evidence="1">Carbohydrate degradation; glycolysis; pyruvate from D-glyceraldehyde 3-phosphate: step 4/5.</text>
</comment>
<comment type="subcellular location">
    <subcellularLocation>
        <location evidence="1">Cytoplasm</location>
    </subcellularLocation>
    <subcellularLocation>
        <location evidence="1">Secreted</location>
    </subcellularLocation>
    <subcellularLocation>
        <location evidence="1">Cell surface</location>
    </subcellularLocation>
    <text evidence="1">Fractions of enolase are present in both the cytoplasm and on the cell surface.</text>
</comment>
<comment type="similarity">
    <text evidence="1">Belongs to the enolase family.</text>
</comment>
<keyword id="KW-0963">Cytoplasm</keyword>
<keyword id="KW-0324">Glycolysis</keyword>
<keyword id="KW-0456">Lyase</keyword>
<keyword id="KW-0460">Magnesium</keyword>
<keyword id="KW-0479">Metal-binding</keyword>
<keyword id="KW-0964">Secreted</keyword>
<proteinExistence type="inferred from homology"/>
<feature type="chain" id="PRO_0000280854" description="Enolase">
    <location>
        <begin position="1"/>
        <end position="425"/>
    </location>
</feature>
<feature type="active site" description="Proton donor" evidence="1">
    <location>
        <position position="205"/>
    </location>
</feature>
<feature type="active site" description="Proton acceptor" evidence="1">
    <location>
        <position position="338"/>
    </location>
</feature>
<feature type="binding site" evidence="1">
    <location>
        <position position="163"/>
    </location>
    <ligand>
        <name>(2R)-2-phosphoglycerate</name>
        <dbReference type="ChEBI" id="CHEBI:58289"/>
    </ligand>
</feature>
<feature type="binding site" evidence="1">
    <location>
        <position position="242"/>
    </location>
    <ligand>
        <name>Mg(2+)</name>
        <dbReference type="ChEBI" id="CHEBI:18420"/>
    </ligand>
</feature>
<feature type="binding site" evidence="1">
    <location>
        <position position="286"/>
    </location>
    <ligand>
        <name>Mg(2+)</name>
        <dbReference type="ChEBI" id="CHEBI:18420"/>
    </ligand>
</feature>
<feature type="binding site" evidence="1">
    <location>
        <position position="313"/>
    </location>
    <ligand>
        <name>Mg(2+)</name>
        <dbReference type="ChEBI" id="CHEBI:18420"/>
    </ligand>
</feature>
<feature type="binding site" evidence="1">
    <location>
        <position position="338"/>
    </location>
    <ligand>
        <name>(2R)-2-phosphoglycerate</name>
        <dbReference type="ChEBI" id="CHEBI:58289"/>
    </ligand>
</feature>
<feature type="binding site" evidence="1">
    <location>
        <position position="367"/>
    </location>
    <ligand>
        <name>(2R)-2-phosphoglycerate</name>
        <dbReference type="ChEBI" id="CHEBI:58289"/>
    </ligand>
</feature>
<feature type="binding site" evidence="1">
    <location>
        <position position="368"/>
    </location>
    <ligand>
        <name>(2R)-2-phosphoglycerate</name>
        <dbReference type="ChEBI" id="CHEBI:58289"/>
    </ligand>
</feature>
<feature type="binding site" evidence="1">
    <location>
        <position position="389"/>
    </location>
    <ligand>
        <name>(2R)-2-phosphoglycerate</name>
        <dbReference type="ChEBI" id="CHEBI:58289"/>
    </ligand>
</feature>